<keyword id="KW-0056">Arginine metabolism</keyword>
<keyword id="KW-0963">Cytoplasm</keyword>
<keyword id="KW-0808">Transferase</keyword>
<name>OTCC_STRPQ</name>
<sequence length="337" mass="37897">MTQVFQGRSFLAEKDFTRAELEYLIDFSAHLKDLKKRGVPHHYLEGKNIALLFEKTSTRTRAAFTTAAIDLGAHPEYLGANDIQLGKKESTEDTAKVLGRMFDGIEFRGFSQRMVEELAEFSGVPVWNGLTDEWHPTQMLADYLTVKENFGKLEGLTLVYCGDGRNNVANSLLVTGAILGVNVHIFSPKELFPEEEIVTLAEGYAKESGARILITEDADEAVKGADVLYTDVWVSMGEEDKFKERVELLQPYQVNMDLVQKAGNDKLIFLHCLPAFHDTNTVYGKDVAEKFGVKEMEVTDEVFRSKYARHFDQAENRMHTIKAVMAATLGNLFIPKV</sequence>
<reference key="1">
    <citation type="journal article" date="2003" name="Genome Res.">
        <title>Genome sequence of an M3 strain of Streptococcus pyogenes reveals a large-scale genomic rearrangement in invasive strains and new insights into phage evolution.</title>
        <authorList>
            <person name="Nakagawa I."/>
            <person name="Kurokawa K."/>
            <person name="Yamashita A."/>
            <person name="Nakata M."/>
            <person name="Tomiyasu Y."/>
            <person name="Okahashi N."/>
            <person name="Kawabata S."/>
            <person name="Yamazaki K."/>
            <person name="Shiba T."/>
            <person name="Yasunaga T."/>
            <person name="Hayashi H."/>
            <person name="Hattori M."/>
            <person name="Hamada S."/>
        </authorList>
    </citation>
    <scope>NUCLEOTIDE SEQUENCE [LARGE SCALE GENOMIC DNA]</scope>
    <source>
        <strain>SSI-1</strain>
    </source>
</reference>
<protein>
    <recommendedName>
        <fullName>Ornithine carbamoyltransferase, catabolic</fullName>
        <shortName>OTCase</shortName>
        <ecNumber>2.1.3.3</ecNumber>
    </recommendedName>
</protein>
<organism>
    <name type="scientific">Streptococcus pyogenes serotype M3 (strain SSI-1)</name>
    <dbReference type="NCBI Taxonomy" id="193567"/>
    <lineage>
        <taxon>Bacteria</taxon>
        <taxon>Bacillati</taxon>
        <taxon>Bacillota</taxon>
        <taxon>Bacilli</taxon>
        <taxon>Lactobacillales</taxon>
        <taxon>Streptococcaceae</taxon>
        <taxon>Streptococcus</taxon>
    </lineage>
</organism>
<gene>
    <name type="primary">arcB</name>
    <name type="ordered locus">SPs0668</name>
</gene>
<feature type="initiator methionine" description="Removed" evidence="1">
    <location>
        <position position="1"/>
    </location>
</feature>
<feature type="chain" id="PRO_0000411429" description="Ornithine carbamoyltransferase, catabolic">
    <location>
        <begin position="2"/>
        <end position="337"/>
    </location>
</feature>
<feature type="binding site" evidence="2">
    <location>
        <begin position="57"/>
        <end position="60"/>
    </location>
    <ligand>
        <name>carbamoyl phosphate</name>
        <dbReference type="ChEBI" id="CHEBI:58228"/>
    </ligand>
</feature>
<feature type="binding site" evidence="2">
    <location>
        <position position="84"/>
    </location>
    <ligand>
        <name>carbamoyl phosphate</name>
        <dbReference type="ChEBI" id="CHEBI:58228"/>
    </ligand>
</feature>
<feature type="binding site" evidence="2">
    <location>
        <position position="108"/>
    </location>
    <ligand>
        <name>carbamoyl phosphate</name>
        <dbReference type="ChEBI" id="CHEBI:58228"/>
    </ligand>
</feature>
<feature type="binding site" evidence="2">
    <location>
        <begin position="135"/>
        <end position="138"/>
    </location>
    <ligand>
        <name>carbamoyl phosphate</name>
        <dbReference type="ChEBI" id="CHEBI:58228"/>
    </ligand>
</feature>
<feature type="binding site" evidence="2">
    <location>
        <position position="167"/>
    </location>
    <ligand>
        <name>L-ornithine</name>
        <dbReference type="ChEBI" id="CHEBI:46911"/>
    </ligand>
</feature>
<feature type="binding site" evidence="2">
    <location>
        <position position="231"/>
    </location>
    <ligand>
        <name>L-ornithine</name>
        <dbReference type="ChEBI" id="CHEBI:46911"/>
    </ligand>
</feature>
<feature type="binding site" evidence="2">
    <location>
        <begin position="235"/>
        <end position="236"/>
    </location>
    <ligand>
        <name>L-ornithine</name>
        <dbReference type="ChEBI" id="CHEBI:46911"/>
    </ligand>
</feature>
<feature type="binding site" evidence="2">
    <location>
        <begin position="272"/>
        <end position="273"/>
    </location>
    <ligand>
        <name>carbamoyl phosphate</name>
        <dbReference type="ChEBI" id="CHEBI:58228"/>
    </ligand>
</feature>
<feature type="binding site" evidence="2">
    <location>
        <position position="317"/>
    </location>
    <ligand>
        <name>carbamoyl phosphate</name>
        <dbReference type="ChEBI" id="CHEBI:58228"/>
    </ligand>
</feature>
<comment type="function">
    <text evidence="1">Reversibly catalyzes the transfer of the carbamoyl group from carbamoyl phosphate (CP) to the N(epsilon) atom of ornithine (ORN) to produce L-citrulline.</text>
</comment>
<comment type="catalytic activity">
    <reaction>
        <text>carbamoyl phosphate + L-ornithine = L-citrulline + phosphate + H(+)</text>
        <dbReference type="Rhea" id="RHEA:19513"/>
        <dbReference type="ChEBI" id="CHEBI:15378"/>
        <dbReference type="ChEBI" id="CHEBI:43474"/>
        <dbReference type="ChEBI" id="CHEBI:46911"/>
        <dbReference type="ChEBI" id="CHEBI:57743"/>
        <dbReference type="ChEBI" id="CHEBI:58228"/>
        <dbReference type="EC" id="2.1.3.3"/>
    </reaction>
</comment>
<comment type="pathway">
    <text>Amino-acid degradation; L-arginine degradation via ADI pathway; carbamoyl phosphate from L-arginine: step 2/2.</text>
</comment>
<comment type="subcellular location">
    <subcellularLocation>
        <location evidence="1">Cytoplasm</location>
    </subcellularLocation>
</comment>
<comment type="similarity">
    <text evidence="3">Belongs to the aspartate/ornithine carbamoyltransferase superfamily. OTCase family.</text>
</comment>
<evidence type="ECO:0000250" key="1"/>
<evidence type="ECO:0000255" key="2">
    <source>
        <dbReference type="HAMAP-Rule" id="MF_01109"/>
    </source>
</evidence>
<evidence type="ECO:0000305" key="3"/>
<proteinExistence type="inferred from homology"/>
<accession>P0DC83</accession>
<accession>P65609</accession>
<accession>Q8P052</accession>
<dbReference type="EC" id="2.1.3.3"/>
<dbReference type="EMBL" id="BA000034">
    <property type="protein sequence ID" value="BAC63763.1"/>
    <property type="molecule type" value="Genomic_DNA"/>
</dbReference>
<dbReference type="SMR" id="P0DC83"/>
<dbReference type="KEGG" id="sps:SPs0668"/>
<dbReference type="HOGENOM" id="CLU_043846_3_1_9"/>
<dbReference type="UniPathway" id="UPA00254">
    <property type="reaction ID" value="UER00365"/>
</dbReference>
<dbReference type="GO" id="GO:0005737">
    <property type="term" value="C:cytoplasm"/>
    <property type="evidence" value="ECO:0007669"/>
    <property type="project" value="UniProtKB-SubCell"/>
</dbReference>
<dbReference type="GO" id="GO:0016597">
    <property type="term" value="F:amino acid binding"/>
    <property type="evidence" value="ECO:0007669"/>
    <property type="project" value="InterPro"/>
</dbReference>
<dbReference type="GO" id="GO:0004585">
    <property type="term" value="F:ornithine carbamoyltransferase activity"/>
    <property type="evidence" value="ECO:0007669"/>
    <property type="project" value="UniProtKB-UniRule"/>
</dbReference>
<dbReference type="GO" id="GO:0042450">
    <property type="term" value="P:arginine biosynthetic process via ornithine"/>
    <property type="evidence" value="ECO:0007669"/>
    <property type="project" value="TreeGrafter"/>
</dbReference>
<dbReference type="GO" id="GO:0019547">
    <property type="term" value="P:arginine catabolic process to ornithine"/>
    <property type="evidence" value="ECO:0007669"/>
    <property type="project" value="UniProtKB-UniRule"/>
</dbReference>
<dbReference type="GO" id="GO:0019240">
    <property type="term" value="P:citrulline biosynthetic process"/>
    <property type="evidence" value="ECO:0007669"/>
    <property type="project" value="TreeGrafter"/>
</dbReference>
<dbReference type="FunFam" id="3.40.50.1370:FF:000004">
    <property type="entry name" value="Ornithine carbamoyltransferase"/>
    <property type="match status" value="1"/>
</dbReference>
<dbReference type="Gene3D" id="3.40.50.1370">
    <property type="entry name" value="Aspartate/ornithine carbamoyltransferase"/>
    <property type="match status" value="2"/>
</dbReference>
<dbReference type="HAMAP" id="MF_01109">
    <property type="entry name" value="OTCase"/>
    <property type="match status" value="1"/>
</dbReference>
<dbReference type="InterPro" id="IPR006132">
    <property type="entry name" value="Asp/Orn_carbamoyltranf_P-bd"/>
</dbReference>
<dbReference type="InterPro" id="IPR006130">
    <property type="entry name" value="Asp/Orn_carbamoylTrfase"/>
</dbReference>
<dbReference type="InterPro" id="IPR036901">
    <property type="entry name" value="Asp/Orn_carbamoylTrfase_sf"/>
</dbReference>
<dbReference type="InterPro" id="IPR006131">
    <property type="entry name" value="Asp_carbamoyltransf_Asp/Orn-bd"/>
</dbReference>
<dbReference type="InterPro" id="IPR002292">
    <property type="entry name" value="Orn/put_carbamltrans"/>
</dbReference>
<dbReference type="InterPro" id="IPR024904">
    <property type="entry name" value="OTCase_ArgI"/>
</dbReference>
<dbReference type="NCBIfam" id="TIGR00658">
    <property type="entry name" value="orni_carb_tr"/>
    <property type="match status" value="1"/>
</dbReference>
<dbReference type="NCBIfam" id="NF001986">
    <property type="entry name" value="PRK00779.1"/>
    <property type="match status" value="1"/>
</dbReference>
<dbReference type="PANTHER" id="PTHR45753:SF1">
    <property type="entry name" value="ORNITHINE CARBAMOYLTRANSFERASE, CATABOLIC"/>
    <property type="match status" value="1"/>
</dbReference>
<dbReference type="PANTHER" id="PTHR45753">
    <property type="entry name" value="ORNITHINE CARBAMOYLTRANSFERASE, MITOCHONDRIAL"/>
    <property type="match status" value="1"/>
</dbReference>
<dbReference type="Pfam" id="PF00185">
    <property type="entry name" value="OTCace"/>
    <property type="match status" value="1"/>
</dbReference>
<dbReference type="Pfam" id="PF02729">
    <property type="entry name" value="OTCace_N"/>
    <property type="match status" value="1"/>
</dbReference>
<dbReference type="PRINTS" id="PR00100">
    <property type="entry name" value="AOTCASE"/>
</dbReference>
<dbReference type="PRINTS" id="PR00102">
    <property type="entry name" value="OTCASE"/>
</dbReference>
<dbReference type="SUPFAM" id="SSF53671">
    <property type="entry name" value="Aspartate/ornithine carbamoyltransferase"/>
    <property type="match status" value="1"/>
</dbReference>
<dbReference type="PROSITE" id="PS00097">
    <property type="entry name" value="CARBAMOYLTRANSFERASE"/>
    <property type="match status" value="1"/>
</dbReference>